<reference key="1">
    <citation type="journal article" date="2005" name="Nat. Biotechnol.">
        <title>Complete genome sequence of the plant commensal Pseudomonas fluorescens Pf-5.</title>
        <authorList>
            <person name="Paulsen I.T."/>
            <person name="Press C.M."/>
            <person name="Ravel J."/>
            <person name="Kobayashi D.Y."/>
            <person name="Myers G.S.A."/>
            <person name="Mavrodi D.V."/>
            <person name="DeBoy R.T."/>
            <person name="Seshadri R."/>
            <person name="Ren Q."/>
            <person name="Madupu R."/>
            <person name="Dodson R.J."/>
            <person name="Durkin A.S."/>
            <person name="Brinkac L.M."/>
            <person name="Daugherty S.C."/>
            <person name="Sullivan S.A."/>
            <person name="Rosovitz M.J."/>
            <person name="Gwinn M.L."/>
            <person name="Zhou L."/>
            <person name="Schneider D.J."/>
            <person name="Cartinhour S.W."/>
            <person name="Nelson W.C."/>
            <person name="Weidman J."/>
            <person name="Watkins K."/>
            <person name="Tran K."/>
            <person name="Khouri H."/>
            <person name="Pierson E.A."/>
            <person name="Pierson L.S. III"/>
            <person name="Thomashow L.S."/>
            <person name="Loper J.E."/>
        </authorList>
    </citation>
    <scope>NUCLEOTIDE SEQUENCE [LARGE SCALE GENOMIC DNA]</scope>
    <source>
        <strain>ATCC BAA-477 / NRRL B-23932 / Pf-5</strain>
    </source>
</reference>
<protein>
    <recommendedName>
        <fullName evidence="1">NADPH-dependent 7-cyano-7-deazaguanine reductase</fullName>
        <ecNumber evidence="1">1.7.1.13</ecNumber>
    </recommendedName>
    <alternativeName>
        <fullName evidence="1">7-cyano-7-carbaguanine reductase</fullName>
    </alternativeName>
    <alternativeName>
        <fullName evidence="1">NADPH-dependent nitrile oxidoreductase</fullName>
    </alternativeName>
    <alternativeName>
        <fullName evidence="1">PreQ(0) reductase</fullName>
    </alternativeName>
</protein>
<accession>Q4KF97</accession>
<keyword id="KW-0963">Cytoplasm</keyword>
<keyword id="KW-0521">NADP</keyword>
<keyword id="KW-0560">Oxidoreductase</keyword>
<keyword id="KW-0671">Queuosine biosynthesis</keyword>
<sequence>MHPAAEHSPLGKSSEYVSTYTPSLLFPIPRAAKWAELGLSADTLPYKGVDYWNCFELSWLLPSGKPVVAIGEFSIPADSPNIIESKSFKLYLNSLNQTPFDDRATLEATLRTDLSAAAGKPVGVRIRSLQEVEAEGVVALPGVCIDDLDISVDSYEHPRPELLRCDASRVVEESVHSHLLKSNCPVTSQPDWGSVVVQYRGAALDHASLLAYLVSFRQHSDFHEQCVERIFLDLQRLLKPERLTVYARYVRRGGLDINPYRSTETADFANHRLVRQ</sequence>
<proteinExistence type="inferred from homology"/>
<dbReference type="EC" id="1.7.1.13" evidence="1"/>
<dbReference type="EMBL" id="CP000076">
    <property type="protein sequence ID" value="AAY91254.1"/>
    <property type="molecule type" value="Genomic_DNA"/>
</dbReference>
<dbReference type="RefSeq" id="WP_011060287.1">
    <property type="nucleotide sequence ID" value="NC_004129.6"/>
</dbReference>
<dbReference type="SMR" id="Q4KF97"/>
<dbReference type="STRING" id="220664.PFL_1967"/>
<dbReference type="KEGG" id="pfl:PFL_1967"/>
<dbReference type="PATRIC" id="fig|220664.5.peg.2007"/>
<dbReference type="eggNOG" id="COG0780">
    <property type="taxonomic scope" value="Bacteria"/>
</dbReference>
<dbReference type="eggNOG" id="COG2904">
    <property type="taxonomic scope" value="Bacteria"/>
</dbReference>
<dbReference type="HOGENOM" id="CLU_054738_0_0_6"/>
<dbReference type="UniPathway" id="UPA00392"/>
<dbReference type="Proteomes" id="UP000008540">
    <property type="component" value="Chromosome"/>
</dbReference>
<dbReference type="GO" id="GO:0005737">
    <property type="term" value="C:cytoplasm"/>
    <property type="evidence" value="ECO:0007669"/>
    <property type="project" value="UniProtKB-SubCell"/>
</dbReference>
<dbReference type="GO" id="GO:0033739">
    <property type="term" value="F:preQ1 synthase activity"/>
    <property type="evidence" value="ECO:0007669"/>
    <property type="project" value="UniProtKB-UniRule"/>
</dbReference>
<dbReference type="GO" id="GO:0008616">
    <property type="term" value="P:queuosine biosynthetic process"/>
    <property type="evidence" value="ECO:0007669"/>
    <property type="project" value="UniProtKB-UniRule"/>
</dbReference>
<dbReference type="GO" id="GO:0006400">
    <property type="term" value="P:tRNA modification"/>
    <property type="evidence" value="ECO:0007669"/>
    <property type="project" value="UniProtKB-UniRule"/>
</dbReference>
<dbReference type="Gene3D" id="3.30.1130.10">
    <property type="match status" value="2"/>
</dbReference>
<dbReference type="HAMAP" id="MF_00817">
    <property type="entry name" value="QueF_type2"/>
    <property type="match status" value="1"/>
</dbReference>
<dbReference type="InterPro" id="IPR043133">
    <property type="entry name" value="GTP-CH-I_C/QueF"/>
</dbReference>
<dbReference type="InterPro" id="IPR050084">
    <property type="entry name" value="NADPH_dep_7-cyano-7-deazaG_red"/>
</dbReference>
<dbReference type="InterPro" id="IPR029500">
    <property type="entry name" value="QueF"/>
</dbReference>
<dbReference type="InterPro" id="IPR029139">
    <property type="entry name" value="QueF_N"/>
</dbReference>
<dbReference type="InterPro" id="IPR016428">
    <property type="entry name" value="QueF_type2"/>
</dbReference>
<dbReference type="NCBIfam" id="TIGR03138">
    <property type="entry name" value="QueF"/>
    <property type="match status" value="1"/>
</dbReference>
<dbReference type="PANTHER" id="PTHR34354">
    <property type="entry name" value="NADPH-DEPENDENT 7-CYANO-7-DEAZAGUANINE REDUCTASE"/>
    <property type="match status" value="1"/>
</dbReference>
<dbReference type="PANTHER" id="PTHR34354:SF1">
    <property type="entry name" value="NADPH-DEPENDENT 7-CYANO-7-DEAZAGUANINE REDUCTASE"/>
    <property type="match status" value="1"/>
</dbReference>
<dbReference type="Pfam" id="PF14489">
    <property type="entry name" value="QueF"/>
    <property type="match status" value="1"/>
</dbReference>
<dbReference type="Pfam" id="PF14819">
    <property type="entry name" value="QueF_N"/>
    <property type="match status" value="1"/>
</dbReference>
<dbReference type="PIRSF" id="PIRSF004750">
    <property type="entry name" value="Nitrile_oxidored_YqcD_prd"/>
    <property type="match status" value="1"/>
</dbReference>
<dbReference type="SUPFAM" id="SSF55620">
    <property type="entry name" value="Tetrahydrobiopterin biosynthesis enzymes-like"/>
    <property type="match status" value="1"/>
</dbReference>
<comment type="function">
    <text evidence="1">Catalyzes the NADPH-dependent reduction of 7-cyano-7-deazaguanine (preQ0) to 7-aminomethyl-7-deazaguanine (preQ1).</text>
</comment>
<comment type="catalytic activity">
    <reaction evidence="1">
        <text>7-aminomethyl-7-carbaguanine + 2 NADP(+) = 7-cyano-7-deazaguanine + 2 NADPH + 3 H(+)</text>
        <dbReference type="Rhea" id="RHEA:13409"/>
        <dbReference type="ChEBI" id="CHEBI:15378"/>
        <dbReference type="ChEBI" id="CHEBI:45075"/>
        <dbReference type="ChEBI" id="CHEBI:57783"/>
        <dbReference type="ChEBI" id="CHEBI:58349"/>
        <dbReference type="ChEBI" id="CHEBI:58703"/>
        <dbReference type="EC" id="1.7.1.13"/>
    </reaction>
</comment>
<comment type="pathway">
    <text evidence="1">tRNA modification; tRNA-queuosine biosynthesis.</text>
</comment>
<comment type="subunit">
    <text evidence="1">Homodimer.</text>
</comment>
<comment type="subcellular location">
    <subcellularLocation>
        <location evidence="1">Cytoplasm</location>
    </subcellularLocation>
</comment>
<comment type="similarity">
    <text evidence="1">Belongs to the GTP cyclohydrolase I family. QueF type 2 subfamily.</text>
</comment>
<feature type="chain" id="PRO_0000163045" description="NADPH-dependent 7-cyano-7-deazaguanine reductase">
    <location>
        <begin position="1"/>
        <end position="276"/>
    </location>
</feature>
<feature type="active site" description="Thioimide intermediate" evidence="1">
    <location>
        <position position="184"/>
    </location>
</feature>
<feature type="active site" description="Proton donor" evidence="1">
    <location>
        <position position="191"/>
    </location>
</feature>
<feature type="binding site" evidence="1">
    <location>
        <begin position="83"/>
        <end position="85"/>
    </location>
    <ligand>
        <name>substrate</name>
    </ligand>
</feature>
<feature type="binding site" evidence="1">
    <location>
        <begin position="85"/>
        <end position="86"/>
    </location>
    <ligand>
        <name>NADPH</name>
        <dbReference type="ChEBI" id="CHEBI:57783"/>
    </ligand>
</feature>
<feature type="binding site" evidence="1">
    <location>
        <begin position="223"/>
        <end position="224"/>
    </location>
    <ligand>
        <name>substrate</name>
    </ligand>
</feature>
<feature type="binding site" evidence="1">
    <location>
        <begin position="252"/>
        <end position="253"/>
    </location>
    <ligand>
        <name>NADPH</name>
        <dbReference type="ChEBI" id="CHEBI:57783"/>
    </ligand>
</feature>
<gene>
    <name evidence="1" type="primary">queF</name>
    <name type="ordered locus">PFL_1967</name>
</gene>
<organism>
    <name type="scientific">Pseudomonas fluorescens (strain ATCC BAA-477 / NRRL B-23932 / Pf-5)</name>
    <dbReference type="NCBI Taxonomy" id="220664"/>
    <lineage>
        <taxon>Bacteria</taxon>
        <taxon>Pseudomonadati</taxon>
        <taxon>Pseudomonadota</taxon>
        <taxon>Gammaproteobacteria</taxon>
        <taxon>Pseudomonadales</taxon>
        <taxon>Pseudomonadaceae</taxon>
        <taxon>Pseudomonas</taxon>
    </lineage>
</organism>
<name>QUEF_PSEF5</name>
<evidence type="ECO:0000255" key="1">
    <source>
        <dbReference type="HAMAP-Rule" id="MF_00817"/>
    </source>
</evidence>